<gene>
    <name evidence="1" type="primary">pdxH</name>
    <name type="ordered locus">ECDH10B_1772</name>
</gene>
<evidence type="ECO:0000255" key="1">
    <source>
        <dbReference type="HAMAP-Rule" id="MF_01629"/>
    </source>
</evidence>
<keyword id="KW-0285">Flavoprotein</keyword>
<keyword id="KW-0288">FMN</keyword>
<keyword id="KW-0560">Oxidoreductase</keyword>
<keyword id="KW-0664">Pyridoxine biosynthesis</keyword>
<organism>
    <name type="scientific">Escherichia coli (strain K12 / DH10B)</name>
    <dbReference type="NCBI Taxonomy" id="316385"/>
    <lineage>
        <taxon>Bacteria</taxon>
        <taxon>Pseudomonadati</taxon>
        <taxon>Pseudomonadota</taxon>
        <taxon>Gammaproteobacteria</taxon>
        <taxon>Enterobacterales</taxon>
        <taxon>Enterobacteriaceae</taxon>
        <taxon>Escherichia</taxon>
    </lineage>
</organism>
<name>PDXH_ECODH</name>
<accession>B1XFV0</accession>
<feature type="chain" id="PRO_1000186311" description="Pyridoxine/pyridoxamine 5'-phosphate oxidase">
    <location>
        <begin position="1"/>
        <end position="218"/>
    </location>
</feature>
<feature type="binding site" evidence="1">
    <location>
        <begin position="14"/>
        <end position="17"/>
    </location>
    <ligand>
        <name>substrate</name>
    </ligand>
</feature>
<feature type="binding site" evidence="1">
    <location>
        <begin position="67"/>
        <end position="72"/>
    </location>
    <ligand>
        <name>FMN</name>
        <dbReference type="ChEBI" id="CHEBI:58210"/>
    </ligand>
</feature>
<feature type="binding site" evidence="1">
    <location>
        <position position="72"/>
    </location>
    <ligand>
        <name>substrate</name>
    </ligand>
</feature>
<feature type="binding site" evidence="1">
    <location>
        <begin position="82"/>
        <end position="83"/>
    </location>
    <ligand>
        <name>FMN</name>
        <dbReference type="ChEBI" id="CHEBI:58210"/>
    </ligand>
</feature>
<feature type="binding site" evidence="1">
    <location>
        <position position="88"/>
    </location>
    <ligand>
        <name>FMN</name>
        <dbReference type="ChEBI" id="CHEBI:58210"/>
    </ligand>
</feature>
<feature type="binding site" evidence="1">
    <location>
        <position position="89"/>
    </location>
    <ligand>
        <name>FMN</name>
        <dbReference type="ChEBI" id="CHEBI:58210"/>
    </ligand>
</feature>
<feature type="binding site" evidence="1">
    <location>
        <position position="111"/>
    </location>
    <ligand>
        <name>FMN</name>
        <dbReference type="ChEBI" id="CHEBI:58210"/>
    </ligand>
</feature>
<feature type="binding site" evidence="1">
    <location>
        <position position="129"/>
    </location>
    <ligand>
        <name>substrate</name>
    </ligand>
</feature>
<feature type="binding site" evidence="1">
    <location>
        <position position="133"/>
    </location>
    <ligand>
        <name>substrate</name>
    </ligand>
</feature>
<feature type="binding site" evidence="1">
    <location>
        <position position="137"/>
    </location>
    <ligand>
        <name>substrate</name>
    </ligand>
</feature>
<feature type="binding site" evidence="1">
    <location>
        <begin position="146"/>
        <end position="147"/>
    </location>
    <ligand>
        <name>FMN</name>
        <dbReference type="ChEBI" id="CHEBI:58210"/>
    </ligand>
</feature>
<feature type="binding site" evidence="1">
    <location>
        <position position="191"/>
    </location>
    <ligand>
        <name>FMN</name>
        <dbReference type="ChEBI" id="CHEBI:58210"/>
    </ligand>
</feature>
<feature type="binding site" evidence="1">
    <location>
        <begin position="197"/>
        <end position="199"/>
    </location>
    <ligand>
        <name>substrate</name>
    </ligand>
</feature>
<feature type="binding site" evidence="1">
    <location>
        <position position="201"/>
    </location>
    <ligand>
        <name>FMN</name>
        <dbReference type="ChEBI" id="CHEBI:58210"/>
    </ligand>
</feature>
<protein>
    <recommendedName>
        <fullName evidence="1">Pyridoxine/pyridoxamine 5'-phosphate oxidase</fullName>
        <ecNumber evidence="1">1.4.3.5</ecNumber>
    </recommendedName>
    <alternativeName>
        <fullName evidence="1">PNP/PMP oxidase</fullName>
        <shortName evidence="1">PNPOx</shortName>
    </alternativeName>
    <alternativeName>
        <fullName evidence="1">Pyridoxal 5'-phosphate synthase</fullName>
    </alternativeName>
</protein>
<reference key="1">
    <citation type="journal article" date="2008" name="J. Bacteriol.">
        <title>The complete genome sequence of Escherichia coli DH10B: insights into the biology of a laboratory workhorse.</title>
        <authorList>
            <person name="Durfee T."/>
            <person name="Nelson R."/>
            <person name="Baldwin S."/>
            <person name="Plunkett G. III"/>
            <person name="Burland V."/>
            <person name="Mau B."/>
            <person name="Petrosino J.F."/>
            <person name="Qin X."/>
            <person name="Muzny D.M."/>
            <person name="Ayele M."/>
            <person name="Gibbs R.A."/>
            <person name="Csorgo B."/>
            <person name="Posfai G."/>
            <person name="Weinstock G.M."/>
            <person name="Blattner F.R."/>
        </authorList>
    </citation>
    <scope>NUCLEOTIDE SEQUENCE [LARGE SCALE GENOMIC DNA]</scope>
    <source>
        <strain>K12 / DH10B</strain>
    </source>
</reference>
<comment type="function">
    <text evidence="1">Catalyzes the oxidation of either pyridoxine 5'-phosphate (PNP) or pyridoxamine 5'-phosphate (PMP) into pyridoxal 5'-phosphate (PLP).</text>
</comment>
<comment type="catalytic activity">
    <reaction evidence="1">
        <text>pyridoxamine 5'-phosphate + O2 + H2O = pyridoxal 5'-phosphate + H2O2 + NH4(+)</text>
        <dbReference type="Rhea" id="RHEA:15817"/>
        <dbReference type="ChEBI" id="CHEBI:15377"/>
        <dbReference type="ChEBI" id="CHEBI:15379"/>
        <dbReference type="ChEBI" id="CHEBI:16240"/>
        <dbReference type="ChEBI" id="CHEBI:28938"/>
        <dbReference type="ChEBI" id="CHEBI:58451"/>
        <dbReference type="ChEBI" id="CHEBI:597326"/>
        <dbReference type="EC" id="1.4.3.5"/>
    </reaction>
</comment>
<comment type="catalytic activity">
    <reaction evidence="1">
        <text>pyridoxine 5'-phosphate + O2 = pyridoxal 5'-phosphate + H2O2</text>
        <dbReference type="Rhea" id="RHEA:15149"/>
        <dbReference type="ChEBI" id="CHEBI:15379"/>
        <dbReference type="ChEBI" id="CHEBI:16240"/>
        <dbReference type="ChEBI" id="CHEBI:58589"/>
        <dbReference type="ChEBI" id="CHEBI:597326"/>
        <dbReference type="EC" id="1.4.3.5"/>
    </reaction>
</comment>
<comment type="cofactor">
    <cofactor evidence="1">
        <name>FMN</name>
        <dbReference type="ChEBI" id="CHEBI:58210"/>
    </cofactor>
    <text evidence="1">Binds 1 FMN per subunit.</text>
</comment>
<comment type="pathway">
    <text evidence="1">Cofactor metabolism; pyridoxal 5'-phosphate salvage; pyridoxal 5'-phosphate from pyridoxamine 5'-phosphate: step 1/1.</text>
</comment>
<comment type="pathway">
    <text evidence="1">Cofactor metabolism; pyridoxal 5'-phosphate salvage; pyridoxal 5'-phosphate from pyridoxine 5'-phosphate: step 1/1.</text>
</comment>
<comment type="subunit">
    <text evidence="1">Homodimer.</text>
</comment>
<comment type="similarity">
    <text evidence="1">Belongs to the pyridoxamine 5'-phosphate oxidase family.</text>
</comment>
<sequence length="218" mass="25545">MSDNDELQQIAHLRREYTKGGLRRRDLPADPLTLFERWLSQACEAKLADPTAMVVATVDEHGQPYQRIVLLKHYDEKGMVFYTNLGSRKAHQIENNPRVSLLFPWHTLERQVMVIGKAERLSTLEVMKYFHSRPRDSQIGAWVSKQSSRISARGILESKFLELKQKFQQGEVPLPSFWGGFRVSLEQIEFWQGGEHRLHDRFLYQRENDAWKIDRLAP</sequence>
<proteinExistence type="inferred from homology"/>
<dbReference type="EC" id="1.4.3.5" evidence="1"/>
<dbReference type="EMBL" id="CP000948">
    <property type="protein sequence ID" value="ACB02844.1"/>
    <property type="molecule type" value="Genomic_DNA"/>
</dbReference>
<dbReference type="RefSeq" id="WP_001282319.1">
    <property type="nucleotide sequence ID" value="NC_010473.1"/>
</dbReference>
<dbReference type="SMR" id="B1XFV0"/>
<dbReference type="GeneID" id="75171699"/>
<dbReference type="KEGG" id="ecd:ECDH10B_1772"/>
<dbReference type="HOGENOM" id="CLU_032263_2_2_6"/>
<dbReference type="UniPathway" id="UPA01068">
    <property type="reaction ID" value="UER00304"/>
</dbReference>
<dbReference type="UniPathway" id="UPA01068">
    <property type="reaction ID" value="UER00305"/>
</dbReference>
<dbReference type="GO" id="GO:0010181">
    <property type="term" value="F:FMN binding"/>
    <property type="evidence" value="ECO:0007669"/>
    <property type="project" value="UniProtKB-UniRule"/>
</dbReference>
<dbReference type="GO" id="GO:0004733">
    <property type="term" value="F:pyridoxamine phosphate oxidase activity"/>
    <property type="evidence" value="ECO:0007669"/>
    <property type="project" value="UniProtKB-UniRule"/>
</dbReference>
<dbReference type="GO" id="GO:0008615">
    <property type="term" value="P:pyridoxine biosynthetic process"/>
    <property type="evidence" value="ECO:0007669"/>
    <property type="project" value="UniProtKB-KW"/>
</dbReference>
<dbReference type="FunFam" id="2.30.110.10:FF:000001">
    <property type="entry name" value="Pyridoxine/pyridoxamine 5'-phosphate oxidase"/>
    <property type="match status" value="1"/>
</dbReference>
<dbReference type="Gene3D" id="2.30.110.10">
    <property type="entry name" value="Electron Transport, Fmn-binding Protein, Chain A"/>
    <property type="match status" value="1"/>
</dbReference>
<dbReference type="HAMAP" id="MF_01629">
    <property type="entry name" value="PdxH"/>
    <property type="match status" value="1"/>
</dbReference>
<dbReference type="InterPro" id="IPR000659">
    <property type="entry name" value="Pyridox_Oxase"/>
</dbReference>
<dbReference type="InterPro" id="IPR019740">
    <property type="entry name" value="Pyridox_Oxase_CS"/>
</dbReference>
<dbReference type="InterPro" id="IPR011576">
    <property type="entry name" value="Pyridox_Oxase_N"/>
</dbReference>
<dbReference type="InterPro" id="IPR019576">
    <property type="entry name" value="Pyridoxamine_oxidase_dimer_C"/>
</dbReference>
<dbReference type="InterPro" id="IPR012349">
    <property type="entry name" value="Split_barrel_FMN-bd"/>
</dbReference>
<dbReference type="NCBIfam" id="TIGR00558">
    <property type="entry name" value="pdxH"/>
    <property type="match status" value="1"/>
</dbReference>
<dbReference type="NCBIfam" id="NF004231">
    <property type="entry name" value="PRK05679.1"/>
    <property type="match status" value="1"/>
</dbReference>
<dbReference type="PANTHER" id="PTHR10851:SF0">
    <property type="entry name" value="PYRIDOXINE-5'-PHOSPHATE OXIDASE"/>
    <property type="match status" value="1"/>
</dbReference>
<dbReference type="PANTHER" id="PTHR10851">
    <property type="entry name" value="PYRIDOXINE-5-PHOSPHATE OXIDASE"/>
    <property type="match status" value="1"/>
</dbReference>
<dbReference type="Pfam" id="PF10590">
    <property type="entry name" value="PNP_phzG_C"/>
    <property type="match status" value="1"/>
</dbReference>
<dbReference type="Pfam" id="PF01243">
    <property type="entry name" value="PNPOx_N"/>
    <property type="match status" value="1"/>
</dbReference>
<dbReference type="PIRSF" id="PIRSF000190">
    <property type="entry name" value="Pyd_amn-ph_oxd"/>
    <property type="match status" value="1"/>
</dbReference>
<dbReference type="SUPFAM" id="SSF50475">
    <property type="entry name" value="FMN-binding split barrel"/>
    <property type="match status" value="1"/>
</dbReference>
<dbReference type="PROSITE" id="PS01064">
    <property type="entry name" value="PYRIDOX_OXIDASE"/>
    <property type="match status" value="1"/>
</dbReference>